<keyword id="KW-0067">ATP-binding</keyword>
<keyword id="KW-0175">Coiled coil</keyword>
<keyword id="KW-0233">DNA recombination</keyword>
<keyword id="KW-0235">DNA replication</keyword>
<keyword id="KW-0255">Endonuclease</keyword>
<keyword id="KW-0269">Exonuclease</keyword>
<keyword id="KW-0378">Hydrolase</keyword>
<keyword id="KW-0540">Nuclease</keyword>
<keyword id="KW-0547">Nucleotide-binding</keyword>
<protein>
    <recommendedName>
        <fullName>Nuclease SbcCD subunit C</fullName>
    </recommendedName>
</protein>
<gene>
    <name type="primary">sbcC</name>
    <name type="ordered locus">SH1561</name>
</gene>
<proteinExistence type="inferred from homology"/>
<name>SBCC_STAHJ</name>
<feature type="chain" id="PRO_0000338476" description="Nuclease SbcCD subunit C">
    <location>
        <begin position="1"/>
        <end position="1011"/>
    </location>
</feature>
<feature type="coiled-coil region" evidence="2">
    <location>
        <begin position="181"/>
        <end position="210"/>
    </location>
</feature>
<feature type="binding site" evidence="2">
    <location>
        <begin position="34"/>
        <end position="41"/>
    </location>
    <ligand>
        <name>ATP</name>
        <dbReference type="ChEBI" id="CHEBI:30616"/>
    </ligand>
</feature>
<accession>Q4L655</accession>
<reference key="1">
    <citation type="journal article" date="2005" name="J. Bacteriol.">
        <title>Whole-genome sequencing of Staphylococcus haemolyticus uncovers the extreme plasticity of its genome and the evolution of human-colonizing staphylococcal species.</title>
        <authorList>
            <person name="Takeuchi F."/>
            <person name="Watanabe S."/>
            <person name="Baba T."/>
            <person name="Yuzawa H."/>
            <person name="Ito T."/>
            <person name="Morimoto Y."/>
            <person name="Kuroda M."/>
            <person name="Cui L."/>
            <person name="Takahashi M."/>
            <person name="Ankai A."/>
            <person name="Baba S."/>
            <person name="Fukui S."/>
            <person name="Lee J.C."/>
            <person name="Hiramatsu K."/>
        </authorList>
    </citation>
    <scope>NUCLEOTIDE SEQUENCE [LARGE SCALE GENOMIC DNA]</scope>
    <source>
        <strain>JCSC1435</strain>
    </source>
</reference>
<sequence length="1011" mass="118626">MRPTKLILNNFGPFIHEVIDFEQINKEQLFLISGKTGSGKTMLFDGIVYALFGKASTEGRNEGELRSHFADGKSPMSVEYEFKINDKKFKISRQAGFIKEGNTSLTPGKLDVFEFDEESQLYELRESKISSGNGFIKDLLGINAEQFRQLFILPQGEFKKFLVSNSSDKQSILRTLFNSIRFEEMQNLLLNQVKDEKKQIESRYSRIQILWEDIETFENDELIQFKSLNSMQTKDIIKAIPQFELVGQHLNEEYEQLKSEHNDALEAIKRKIEENNKLIESLKELDRNKDKKVQLEKNKDSIEKLKAELRKIIEIKPLSQLYNQRNTKEQKYENTKVKLNSILEELNELNDKLEKFKKEKEILNEQLEDINIKSEYIDKTKQFYSNINKYREAFNEIKQNETYLKENNQKQEENKNLIDKLNNDIAKIDVNNENIDEITQEIFQLTNTFDKKVTLRENKKKYQSLSQKYNETENSIKKTKEQISDLKLQLENIDKSNIDLNDKQTFIQEIQNALHVGDTCPICGNEIESLNEHIKFDEIAKNQNLIKEVNNQLNKKINELTKLETTSDYISNQMSELEINDDEICDINEIEQQLRTKNKEKEKLQIQIKQREKLKSALDKHKDIKHSLQIKHEKLLSLKHQFETLINEFKSYTNYDETNKFEQCFKQYEQIVTDYVSKSEVLEKEINQTKQQIEIETNNLNNNKLAIKELEQEISGHSDEINQEMKRIGLNSYKDVEILLSKLENKEQIEMKIQQYEHDHQKLTLEIERLSKLTKDNKSESVEKLEATKTEIESNYNKYVEASATIQYQVQKNKDKFNSIMDHINYLEKELKEQQEIFELSEVLSGKNSKKLTLENYVLIYYLERIIHQANIRLERMSGERYQLKRRESISHGYSGLEIEVFDFHSNKSRHISSLSGGETFQASLALALGLSEVVQQESGGITLESMFIDEGFGTLDQETLETALDTLVKLKTSGRMVGIISHVSELKQRIPLILEVTSNQYQSHTRFKWN</sequence>
<comment type="function">
    <text evidence="1">SbcCD cleaves DNA hairpin structures. These structures can inhibit DNA replication and are intermediates in certain DNA recombination reactions. The complex acts as a 3'-&gt;5' double strand exonuclease that can open hairpins. It also has a 5' single-strand endonuclease activity (By similarity).</text>
</comment>
<comment type="subunit">
    <text evidence="1">Heterodimer of SbcC and SbcD.</text>
</comment>
<comment type="similarity">
    <text evidence="3">Belongs to the SMC family. SbcC subfamily.</text>
</comment>
<dbReference type="EMBL" id="AP006716">
    <property type="protein sequence ID" value="BAE04870.1"/>
    <property type="molecule type" value="Genomic_DNA"/>
</dbReference>
<dbReference type="RefSeq" id="WP_011275852.1">
    <property type="nucleotide sequence ID" value="NC_007168.1"/>
</dbReference>
<dbReference type="SMR" id="Q4L655"/>
<dbReference type="KEGG" id="sha:SH1561"/>
<dbReference type="eggNOG" id="COG0419">
    <property type="taxonomic scope" value="Bacteria"/>
</dbReference>
<dbReference type="HOGENOM" id="CLU_004785_2_0_9"/>
<dbReference type="OrthoDB" id="9795626at2"/>
<dbReference type="Proteomes" id="UP000000543">
    <property type="component" value="Chromosome"/>
</dbReference>
<dbReference type="GO" id="GO:0005524">
    <property type="term" value="F:ATP binding"/>
    <property type="evidence" value="ECO:0007669"/>
    <property type="project" value="UniProtKB-KW"/>
</dbReference>
<dbReference type="GO" id="GO:0016887">
    <property type="term" value="F:ATP hydrolysis activity"/>
    <property type="evidence" value="ECO:0007669"/>
    <property type="project" value="InterPro"/>
</dbReference>
<dbReference type="GO" id="GO:0004519">
    <property type="term" value="F:endonuclease activity"/>
    <property type="evidence" value="ECO:0007669"/>
    <property type="project" value="UniProtKB-KW"/>
</dbReference>
<dbReference type="GO" id="GO:0004527">
    <property type="term" value="F:exonuclease activity"/>
    <property type="evidence" value="ECO:0007669"/>
    <property type="project" value="UniProtKB-KW"/>
</dbReference>
<dbReference type="GO" id="GO:0006310">
    <property type="term" value="P:DNA recombination"/>
    <property type="evidence" value="ECO:0007669"/>
    <property type="project" value="UniProtKB-KW"/>
</dbReference>
<dbReference type="GO" id="GO:0006260">
    <property type="term" value="P:DNA replication"/>
    <property type="evidence" value="ECO:0007669"/>
    <property type="project" value="UniProtKB-KW"/>
</dbReference>
<dbReference type="GO" id="GO:0006302">
    <property type="term" value="P:double-strand break repair"/>
    <property type="evidence" value="ECO:0007669"/>
    <property type="project" value="InterPro"/>
</dbReference>
<dbReference type="Gene3D" id="3.40.50.300">
    <property type="entry name" value="P-loop containing nucleotide triphosphate hydrolases"/>
    <property type="match status" value="2"/>
</dbReference>
<dbReference type="InterPro" id="IPR027417">
    <property type="entry name" value="P-loop_NTPase"/>
</dbReference>
<dbReference type="InterPro" id="IPR038729">
    <property type="entry name" value="Rad50/SbcC_AAA"/>
</dbReference>
<dbReference type="InterPro" id="IPR053380">
    <property type="entry name" value="SbcCD_Nuclease_C"/>
</dbReference>
<dbReference type="NCBIfam" id="NF041751">
    <property type="entry name" value="sbcc_Staph"/>
    <property type="match status" value="1"/>
</dbReference>
<dbReference type="PANTHER" id="PTHR32114">
    <property type="entry name" value="ABC TRANSPORTER ABCH.3"/>
    <property type="match status" value="1"/>
</dbReference>
<dbReference type="PANTHER" id="PTHR32114:SF2">
    <property type="entry name" value="ABC TRANSPORTER ABCH.3"/>
    <property type="match status" value="1"/>
</dbReference>
<dbReference type="Pfam" id="PF13476">
    <property type="entry name" value="AAA_23"/>
    <property type="match status" value="1"/>
</dbReference>
<dbReference type="Pfam" id="PF13558">
    <property type="entry name" value="SbcC_Walker_B"/>
    <property type="match status" value="1"/>
</dbReference>
<dbReference type="SUPFAM" id="SSF52540">
    <property type="entry name" value="P-loop containing nucleoside triphosphate hydrolases"/>
    <property type="match status" value="1"/>
</dbReference>
<evidence type="ECO:0000250" key="1"/>
<evidence type="ECO:0000255" key="2"/>
<evidence type="ECO:0000305" key="3"/>
<organism>
    <name type="scientific">Staphylococcus haemolyticus (strain JCSC1435)</name>
    <dbReference type="NCBI Taxonomy" id="279808"/>
    <lineage>
        <taxon>Bacteria</taxon>
        <taxon>Bacillati</taxon>
        <taxon>Bacillota</taxon>
        <taxon>Bacilli</taxon>
        <taxon>Bacillales</taxon>
        <taxon>Staphylococcaceae</taxon>
        <taxon>Staphylococcus</taxon>
    </lineage>
</organism>